<reference key="1">
    <citation type="submission" date="2007-02" db="EMBL/GenBank/DDBJ databases">
        <authorList>
            <consortium name="NIH - Mammalian Gene Collection (MGC) project"/>
        </authorList>
    </citation>
    <scope>NUCLEOTIDE SEQUENCE [LARGE SCALE MRNA]</scope>
    <source>
        <strain>Hereford</strain>
        <tissue>Basal ganglia</tissue>
    </source>
</reference>
<name>CLP1_BOVIN</name>
<feature type="chain" id="PRO_0000375166" description="Polyribonucleotide 5'-hydroxyl-kinase Clp1">
    <location>
        <begin position="1"/>
        <end position="425"/>
    </location>
</feature>
<feature type="binding site" evidence="2">
    <location>
        <position position="22"/>
    </location>
    <ligand>
        <name>ATP</name>
        <dbReference type="ChEBI" id="CHEBI:30616"/>
    </ligand>
</feature>
<feature type="binding site" evidence="2">
    <location>
        <position position="62"/>
    </location>
    <ligand>
        <name>ATP</name>
        <dbReference type="ChEBI" id="CHEBI:30616"/>
    </ligand>
</feature>
<feature type="binding site" evidence="2">
    <location>
        <begin position="124"/>
        <end position="129"/>
    </location>
    <ligand>
        <name>ATP</name>
        <dbReference type="ChEBI" id="CHEBI:30616"/>
    </ligand>
</feature>
<proteinExistence type="evidence at transcript level"/>
<evidence type="ECO:0000250" key="1"/>
<evidence type="ECO:0000255" key="2">
    <source>
        <dbReference type="HAMAP-Rule" id="MF_03035"/>
    </source>
</evidence>
<gene>
    <name evidence="2" type="primary">CLP1</name>
</gene>
<comment type="function">
    <text evidence="1">Polynucleotide kinase that can phosphorylate the 5'-hydroxyl groups of double-stranded RNA (dsRNA), single-stranded RNA (ssRNA), double-stranded DNA (dsDNA) and double-stranded DNA:RNA hybrids. dsRNA is phosphorylated more efficiently than dsDNA, and the RNA component of a DNA:RNA hybrid is phosphorylated more efficiently than the DNA component. Plays a key role in both tRNA splicing and mRNA 3'-end formation. Component of the tRNA splicing endonuclease complex: phosphorylates the 5'-terminus of the tRNA 3'-exon during tRNA splicing; this phosphorylation event is a prerequisite for the subsequent ligation of the two exon halves and the production of a mature tRNA. Its role in tRNA splicing and maturation is required for cerebellar development. Component of the pre-mRNA cleavage complex II (CF-II), which seems to be required for mRNA 3'-end formation. Also phosphorylates the 5'-terminus of exogenously introduced short interfering RNAs (siRNAs), which is a necessary prerequisite for their incorporation into the RNA-induced silencing complex (RISC). However, endogenous siRNAs and microRNAs (miRNAs) that are produced by the cleavage of dsRNA precursors by DICER1 already contain a 5'-phosphate group, so this protein may be dispensible for normal RNA-mediated gene silencing (By similarity).</text>
</comment>
<comment type="catalytic activity">
    <reaction evidence="2">
        <text>a 5'-end dephospho-2'-deoxyribonucleoside-DNA + ATP = a 5'-end 5'-phospho-2'-deoxyribonucleoside-DNA + ADP + H(+)</text>
        <dbReference type="Rhea" id="RHEA:15669"/>
        <dbReference type="Rhea" id="RHEA-COMP:13180"/>
        <dbReference type="Rhea" id="RHEA-COMP:13184"/>
        <dbReference type="ChEBI" id="CHEBI:15378"/>
        <dbReference type="ChEBI" id="CHEBI:30616"/>
        <dbReference type="ChEBI" id="CHEBI:136412"/>
        <dbReference type="ChEBI" id="CHEBI:136416"/>
        <dbReference type="ChEBI" id="CHEBI:456216"/>
        <dbReference type="EC" id="2.7.1.78"/>
    </reaction>
</comment>
<comment type="catalytic activity">
    <reaction evidence="2">
        <text>a 5'-end dephospho-ribonucleoside-RNA + ATP = a 5'-end 5'-phospho-ribonucleoside-RNA + ADP + H(+)</text>
        <dbReference type="Rhea" id="RHEA:54580"/>
        <dbReference type="Rhea" id="RHEA-COMP:13936"/>
        <dbReference type="Rhea" id="RHEA-COMP:15179"/>
        <dbReference type="ChEBI" id="CHEBI:15378"/>
        <dbReference type="ChEBI" id="CHEBI:30616"/>
        <dbReference type="ChEBI" id="CHEBI:138282"/>
        <dbReference type="ChEBI" id="CHEBI:138284"/>
        <dbReference type="ChEBI" id="CHEBI:456216"/>
        <dbReference type="EC" id="2.7.1.78"/>
    </reaction>
</comment>
<comment type="cofactor">
    <cofactor evidence="2">
        <name>Mg(2+)</name>
        <dbReference type="ChEBI" id="CHEBI:18420"/>
    </cofactor>
    <cofactor evidence="2">
        <name>Mn(2+)</name>
        <dbReference type="ChEBI" id="CHEBI:29035"/>
    </cofactor>
    <cofactor evidence="2">
        <name>Ni(2+)</name>
        <dbReference type="ChEBI" id="CHEBI:49786"/>
    </cofactor>
</comment>
<comment type="subunit">
    <text evidence="2">Component of the tRNA splicing endonuclease complex, composed of CLP1, TSEN2, TSEN15, TSEN34 and TSEN54. Component of pre-mRNA cleavage complex II (CF-II). Also associates with numerous components of the pre-mRNA cleavage complex I (CF-I/CFIm), including NUDT21, CPSF2, CPSF3, CPSF6 and CPSF7. Interacts with CSTF2 and SYMPK.</text>
</comment>
<comment type="subcellular location">
    <subcellularLocation>
        <location evidence="2">Nucleus</location>
    </subcellularLocation>
</comment>
<comment type="similarity">
    <text evidence="2">Belongs to the Clp1 family. Clp1 subfamily.</text>
</comment>
<protein>
    <recommendedName>
        <fullName evidence="2">Polyribonucleotide 5'-hydroxyl-kinase Clp1</fullName>
        <ecNumber evidence="2">2.7.1.78</ecNumber>
    </recommendedName>
    <alternativeName>
        <fullName evidence="2">Polyadenylation factor Clp1</fullName>
    </alternativeName>
    <alternativeName>
        <fullName evidence="2">Polynucleotide kinase Clp1</fullName>
    </alternativeName>
    <alternativeName>
        <fullName evidence="2">Pre-mRNA cleavage complex II protein Clp1</fullName>
    </alternativeName>
</protein>
<organism>
    <name type="scientific">Bos taurus</name>
    <name type="common">Bovine</name>
    <dbReference type="NCBI Taxonomy" id="9913"/>
    <lineage>
        <taxon>Eukaryota</taxon>
        <taxon>Metazoa</taxon>
        <taxon>Chordata</taxon>
        <taxon>Craniata</taxon>
        <taxon>Vertebrata</taxon>
        <taxon>Euteleostomi</taxon>
        <taxon>Mammalia</taxon>
        <taxon>Eutheria</taxon>
        <taxon>Laurasiatheria</taxon>
        <taxon>Artiodactyla</taxon>
        <taxon>Ruminantia</taxon>
        <taxon>Pecora</taxon>
        <taxon>Bovidae</taxon>
        <taxon>Bovinae</taxon>
        <taxon>Bos</taxon>
    </lineage>
</organism>
<keyword id="KW-0067">ATP-binding</keyword>
<keyword id="KW-0418">Kinase</keyword>
<keyword id="KW-0460">Magnesium</keyword>
<keyword id="KW-0464">Manganese</keyword>
<keyword id="KW-0507">mRNA processing</keyword>
<keyword id="KW-0533">Nickel</keyword>
<keyword id="KW-0547">Nucleotide-binding</keyword>
<keyword id="KW-0539">Nucleus</keyword>
<keyword id="KW-1185">Reference proteome</keyword>
<keyword id="KW-0808">Transferase</keyword>
<keyword id="KW-0819">tRNA processing</keyword>
<accession>A2VE01</accession>
<sequence>MGEEANDDKKPTTKFELERETELRFEVEASQSVQLELLAGMAEIFGTELTRNKKFTFDAGAKVAVFTWHGCSLQLSGRTEVAYVSKDTPMLLYLNTHTALEQMRRQAEKEEERGPRVMVVGPTDVGKSTVCRLLLNYAVRLGRRPTYVELDVGQGSVSIPGTMGALYIERPADVEEGFSIQAPLVYHFGSTTPGTNIKLYNKITSRLADVFNQRCEVNRRASVSGCVINTCGWVKGSGYQALVHAASAFEVDVVVVLDQERLYNELKRDLPHFVRTVLLPKSGGVVERSKDFRRECRDERIREYFYGFRGCFYPHAFNVKFSDVKIYKVGAPTIPDSCLPLGMSQEDNQLKLVPVTPGRDMVHHLLSVSTAEGTEENLSETSVAGFIVVTSVDLEHQVFTVLSPAPRPLPKNFLLIMDIRFMDLK</sequence>
<dbReference type="EC" id="2.7.1.78" evidence="2"/>
<dbReference type="EMBL" id="BC133499">
    <property type="protein sequence ID" value="AAI33500.1"/>
    <property type="molecule type" value="mRNA"/>
</dbReference>
<dbReference type="RefSeq" id="NP_001075182.1">
    <property type="nucleotide sequence ID" value="NM_001081713.1"/>
</dbReference>
<dbReference type="RefSeq" id="XP_005216587.1">
    <property type="nucleotide sequence ID" value="XM_005216530.5"/>
</dbReference>
<dbReference type="RefSeq" id="XP_005216588.1">
    <property type="nucleotide sequence ID" value="XM_005216531.5"/>
</dbReference>
<dbReference type="RefSeq" id="XP_005216589.1">
    <property type="nucleotide sequence ID" value="XM_005216532.5"/>
</dbReference>
<dbReference type="RefSeq" id="XP_024830855.1">
    <property type="nucleotide sequence ID" value="XM_024975087.2"/>
</dbReference>
<dbReference type="RefSeq" id="XP_059730591.1">
    <property type="nucleotide sequence ID" value="XM_059874608.1"/>
</dbReference>
<dbReference type="SMR" id="A2VE01"/>
<dbReference type="FunCoup" id="A2VE01">
    <property type="interactions" value="3560"/>
</dbReference>
<dbReference type="STRING" id="9913.ENSBTAP00000062480"/>
<dbReference type="PaxDb" id="9913-ENSBTAP00000008507"/>
<dbReference type="Ensembl" id="ENSBTAT00000008507.4">
    <property type="protein sequence ID" value="ENSBTAP00000008507.3"/>
    <property type="gene ID" value="ENSBTAG00000006493.5"/>
</dbReference>
<dbReference type="GeneID" id="506507"/>
<dbReference type="KEGG" id="bta:506507"/>
<dbReference type="CTD" id="10978"/>
<dbReference type="VEuPathDB" id="HostDB:ENSBTAG00000006493"/>
<dbReference type="VGNC" id="VGNC:27457">
    <property type="gene designation" value="CLP1"/>
</dbReference>
<dbReference type="eggNOG" id="KOG2749">
    <property type="taxonomic scope" value="Eukaryota"/>
</dbReference>
<dbReference type="GeneTree" id="ENSGT00940000153668"/>
<dbReference type="HOGENOM" id="CLU_018195_1_0_1"/>
<dbReference type="InParanoid" id="A2VE01"/>
<dbReference type="OMA" id="VQYVNCH"/>
<dbReference type="OrthoDB" id="258143at2759"/>
<dbReference type="TreeFam" id="TF105795"/>
<dbReference type="Reactome" id="R-BTA-72187">
    <property type="pathway name" value="mRNA 3'-end processing"/>
</dbReference>
<dbReference type="Reactome" id="R-BTA-72203">
    <property type="pathway name" value="Processing of Capped Intron-Containing Pre-mRNA"/>
</dbReference>
<dbReference type="Reactome" id="R-BTA-73856">
    <property type="pathway name" value="RNA Polymerase II Transcription Termination"/>
</dbReference>
<dbReference type="Reactome" id="R-BTA-77595">
    <property type="pathway name" value="Processing of Intronless Pre-mRNAs"/>
</dbReference>
<dbReference type="Proteomes" id="UP000009136">
    <property type="component" value="Chromosome 15"/>
</dbReference>
<dbReference type="Bgee" id="ENSBTAG00000006493">
    <property type="expression patterns" value="Expressed in oocyte and 109 other cell types or tissues"/>
</dbReference>
<dbReference type="GO" id="GO:0005829">
    <property type="term" value="C:cytosol"/>
    <property type="evidence" value="ECO:0007669"/>
    <property type="project" value="Ensembl"/>
</dbReference>
<dbReference type="GO" id="GO:0005849">
    <property type="term" value="C:mRNA cleavage factor complex"/>
    <property type="evidence" value="ECO:0007669"/>
    <property type="project" value="UniProtKB-UniRule"/>
</dbReference>
<dbReference type="GO" id="GO:0005654">
    <property type="term" value="C:nucleoplasm"/>
    <property type="evidence" value="ECO:0007669"/>
    <property type="project" value="Ensembl"/>
</dbReference>
<dbReference type="GO" id="GO:0005634">
    <property type="term" value="C:nucleus"/>
    <property type="evidence" value="ECO:0000318"/>
    <property type="project" value="GO_Central"/>
</dbReference>
<dbReference type="GO" id="GO:0000214">
    <property type="term" value="C:tRNA-intron endonuclease complex"/>
    <property type="evidence" value="ECO:0000250"/>
    <property type="project" value="UniProtKB"/>
</dbReference>
<dbReference type="GO" id="GO:0005524">
    <property type="term" value="F:ATP binding"/>
    <property type="evidence" value="ECO:0007669"/>
    <property type="project" value="UniProtKB-UniRule"/>
</dbReference>
<dbReference type="GO" id="GO:0046404">
    <property type="term" value="F:ATP-dependent polydeoxyribonucleotide 5'-hydroxyl-kinase activity"/>
    <property type="evidence" value="ECO:0007669"/>
    <property type="project" value="UniProtKB-UniRule"/>
</dbReference>
<dbReference type="GO" id="GO:0051736">
    <property type="term" value="F:ATP-dependent polyribonucleotide 5'-hydroxyl-kinase activity"/>
    <property type="evidence" value="ECO:0007669"/>
    <property type="project" value="UniProtKB-UniRule"/>
</dbReference>
<dbReference type="GO" id="GO:0051731">
    <property type="term" value="F:polynucleotide 5'-hydroxyl-kinase activity"/>
    <property type="evidence" value="ECO:0000318"/>
    <property type="project" value="GO_Central"/>
</dbReference>
<dbReference type="GO" id="GO:0021695">
    <property type="term" value="P:cerebellar cortex development"/>
    <property type="evidence" value="ECO:0000250"/>
    <property type="project" value="UniProtKB"/>
</dbReference>
<dbReference type="GO" id="GO:0098795">
    <property type="term" value="P:global gene silencing by mRNA cleavage"/>
    <property type="evidence" value="ECO:0000250"/>
    <property type="project" value="UniProtKB"/>
</dbReference>
<dbReference type="GO" id="GO:0031124">
    <property type="term" value="P:mRNA 3'-end processing"/>
    <property type="evidence" value="ECO:0007669"/>
    <property type="project" value="UniProtKB-UniRule"/>
</dbReference>
<dbReference type="GO" id="GO:0070922">
    <property type="term" value="P:RISC complex assembly"/>
    <property type="evidence" value="ECO:0000250"/>
    <property type="project" value="UniProtKB"/>
</dbReference>
<dbReference type="GO" id="GO:0006388">
    <property type="term" value="P:tRNA splicing, via endonucleolytic cleavage and ligation"/>
    <property type="evidence" value="ECO:0000250"/>
    <property type="project" value="UniProtKB"/>
</dbReference>
<dbReference type="CDD" id="cd01983">
    <property type="entry name" value="SIMIBI"/>
    <property type="match status" value="1"/>
</dbReference>
<dbReference type="FunFam" id="2.40.30.330:FF:000001">
    <property type="entry name" value="Protein CLP1 homolog"/>
    <property type="match status" value="1"/>
</dbReference>
<dbReference type="FunFam" id="3.40.50.300:FF:000454">
    <property type="entry name" value="Protein CLP1 homolog"/>
    <property type="match status" value="1"/>
</dbReference>
<dbReference type="FunFam" id="2.60.120.1030:FF:000001">
    <property type="entry name" value="Protein CLP1 homolog 5"/>
    <property type="match status" value="1"/>
</dbReference>
<dbReference type="Gene3D" id="2.60.120.1030">
    <property type="entry name" value="Clp1, DNA binding domain"/>
    <property type="match status" value="1"/>
</dbReference>
<dbReference type="Gene3D" id="3.40.50.300">
    <property type="entry name" value="P-loop containing nucleotide triphosphate hydrolases"/>
    <property type="match status" value="1"/>
</dbReference>
<dbReference type="Gene3D" id="2.40.30.330">
    <property type="entry name" value="Pre-mRNA cleavage complex subunit Clp1, C-terminal domain"/>
    <property type="match status" value="1"/>
</dbReference>
<dbReference type="HAMAP" id="MF_03035">
    <property type="entry name" value="Clp1"/>
    <property type="match status" value="1"/>
</dbReference>
<dbReference type="InterPro" id="IPR028606">
    <property type="entry name" value="Clp1"/>
</dbReference>
<dbReference type="InterPro" id="IPR045116">
    <property type="entry name" value="Clp1/Grc3"/>
</dbReference>
<dbReference type="InterPro" id="IPR010655">
    <property type="entry name" value="Clp1_C"/>
</dbReference>
<dbReference type="InterPro" id="IPR038238">
    <property type="entry name" value="Clp1_C_sf"/>
</dbReference>
<dbReference type="InterPro" id="IPR032324">
    <property type="entry name" value="Clp1_N"/>
</dbReference>
<dbReference type="InterPro" id="IPR038239">
    <property type="entry name" value="Clp1_N_sf"/>
</dbReference>
<dbReference type="InterPro" id="IPR032319">
    <property type="entry name" value="CLP1_P"/>
</dbReference>
<dbReference type="InterPro" id="IPR027417">
    <property type="entry name" value="P-loop_NTPase"/>
</dbReference>
<dbReference type="PANTHER" id="PTHR12755">
    <property type="entry name" value="CLEAVAGE/POLYADENYLATION FACTOR IA SUBUNIT CLP1P"/>
    <property type="match status" value="1"/>
</dbReference>
<dbReference type="PANTHER" id="PTHR12755:SF6">
    <property type="entry name" value="POLYRIBONUCLEOTIDE 5'-HYDROXYL-KINASE CLP1"/>
    <property type="match status" value="1"/>
</dbReference>
<dbReference type="Pfam" id="PF06807">
    <property type="entry name" value="Clp1"/>
    <property type="match status" value="1"/>
</dbReference>
<dbReference type="Pfam" id="PF16573">
    <property type="entry name" value="CLP1_N"/>
    <property type="match status" value="1"/>
</dbReference>
<dbReference type="Pfam" id="PF16575">
    <property type="entry name" value="CLP1_P"/>
    <property type="match status" value="1"/>
</dbReference>
<dbReference type="SUPFAM" id="SSF52540">
    <property type="entry name" value="P-loop containing nucleoside triphosphate hydrolases"/>
    <property type="match status" value="2"/>
</dbReference>